<sequence>MAVVKCKPTSPGRRHVVKVVNPELHKGKPFAPLLEKNSKSGGRNNNGRITTRHIGGGHKQAYRIVDFKRNKDGIPAVVERLEYDPNRSANIALVLYKDGERRYILAPKGLKAGDQIQSGVDAAIKPGNTLPMRNIPVGSTVHNVEMKPGKGGQLARSAGTYVQIVARDGAYVTLRLRSGEMRKVEADCRATLGEVGNAEHMLRVLGKAGAARWRGVRPTVRGTAMNPVDHPHGGGEGRNFGKHPVTPWGVQTKGKKTRSNKRTDKFIVRRRSK</sequence>
<name>RL2_ECOHS</name>
<comment type="function">
    <text evidence="1">One of the primary rRNA binding proteins. Required for association of the 30S and 50S subunits to form the 70S ribosome, for tRNA binding and peptide bond formation. It has been suggested to have peptidyltransferase activity; this is somewhat controversial. Makes several contacts with the 16S rRNA in the 70S ribosome.</text>
</comment>
<comment type="subunit">
    <text evidence="1">Part of the 50S ribosomal subunit. Forms a bridge to the 30S subunit in the 70S ribosome.</text>
</comment>
<comment type="similarity">
    <text evidence="1">Belongs to the universal ribosomal protein uL2 family.</text>
</comment>
<dbReference type="EMBL" id="CP000802">
    <property type="protein sequence ID" value="ABV07726.1"/>
    <property type="molecule type" value="Genomic_DNA"/>
</dbReference>
<dbReference type="RefSeq" id="WP_000301864.1">
    <property type="nucleotide sequence ID" value="NC_009800.1"/>
</dbReference>
<dbReference type="SMR" id="A8A5C2"/>
<dbReference type="GeneID" id="93778670"/>
<dbReference type="KEGG" id="ecx:EcHS_A3511"/>
<dbReference type="HOGENOM" id="CLU_036235_2_1_6"/>
<dbReference type="GO" id="GO:0005829">
    <property type="term" value="C:cytosol"/>
    <property type="evidence" value="ECO:0007669"/>
    <property type="project" value="UniProtKB-ARBA"/>
</dbReference>
<dbReference type="GO" id="GO:0015934">
    <property type="term" value="C:large ribosomal subunit"/>
    <property type="evidence" value="ECO:0007669"/>
    <property type="project" value="InterPro"/>
</dbReference>
<dbReference type="GO" id="GO:0019843">
    <property type="term" value="F:rRNA binding"/>
    <property type="evidence" value="ECO:0007669"/>
    <property type="project" value="UniProtKB-UniRule"/>
</dbReference>
<dbReference type="GO" id="GO:0003735">
    <property type="term" value="F:structural constituent of ribosome"/>
    <property type="evidence" value="ECO:0007669"/>
    <property type="project" value="InterPro"/>
</dbReference>
<dbReference type="GO" id="GO:0016740">
    <property type="term" value="F:transferase activity"/>
    <property type="evidence" value="ECO:0007669"/>
    <property type="project" value="InterPro"/>
</dbReference>
<dbReference type="GO" id="GO:0002181">
    <property type="term" value="P:cytoplasmic translation"/>
    <property type="evidence" value="ECO:0007669"/>
    <property type="project" value="TreeGrafter"/>
</dbReference>
<dbReference type="FunFam" id="2.30.30.30:FF:000001">
    <property type="entry name" value="50S ribosomal protein L2"/>
    <property type="match status" value="1"/>
</dbReference>
<dbReference type="FunFam" id="2.40.50.140:FF:000003">
    <property type="entry name" value="50S ribosomal protein L2"/>
    <property type="match status" value="1"/>
</dbReference>
<dbReference type="FunFam" id="4.10.950.10:FF:000001">
    <property type="entry name" value="50S ribosomal protein L2"/>
    <property type="match status" value="1"/>
</dbReference>
<dbReference type="Gene3D" id="2.30.30.30">
    <property type="match status" value="1"/>
</dbReference>
<dbReference type="Gene3D" id="2.40.50.140">
    <property type="entry name" value="Nucleic acid-binding proteins"/>
    <property type="match status" value="1"/>
</dbReference>
<dbReference type="Gene3D" id="4.10.950.10">
    <property type="entry name" value="Ribosomal protein L2, domain 3"/>
    <property type="match status" value="1"/>
</dbReference>
<dbReference type="HAMAP" id="MF_01320_B">
    <property type="entry name" value="Ribosomal_uL2_B"/>
    <property type="match status" value="1"/>
</dbReference>
<dbReference type="InterPro" id="IPR012340">
    <property type="entry name" value="NA-bd_OB-fold"/>
</dbReference>
<dbReference type="InterPro" id="IPR014722">
    <property type="entry name" value="Rib_uL2_dom2"/>
</dbReference>
<dbReference type="InterPro" id="IPR002171">
    <property type="entry name" value="Ribosomal_uL2"/>
</dbReference>
<dbReference type="InterPro" id="IPR005880">
    <property type="entry name" value="Ribosomal_uL2_bac/org-type"/>
</dbReference>
<dbReference type="InterPro" id="IPR022669">
    <property type="entry name" value="Ribosomal_uL2_C"/>
</dbReference>
<dbReference type="InterPro" id="IPR022671">
    <property type="entry name" value="Ribosomal_uL2_CS"/>
</dbReference>
<dbReference type="InterPro" id="IPR014726">
    <property type="entry name" value="Ribosomal_uL2_dom3"/>
</dbReference>
<dbReference type="InterPro" id="IPR022666">
    <property type="entry name" value="Ribosomal_uL2_RNA-bd_dom"/>
</dbReference>
<dbReference type="InterPro" id="IPR008991">
    <property type="entry name" value="Translation_prot_SH3-like_sf"/>
</dbReference>
<dbReference type="NCBIfam" id="TIGR01171">
    <property type="entry name" value="rplB_bact"/>
    <property type="match status" value="1"/>
</dbReference>
<dbReference type="PANTHER" id="PTHR13691:SF5">
    <property type="entry name" value="LARGE RIBOSOMAL SUBUNIT PROTEIN UL2M"/>
    <property type="match status" value="1"/>
</dbReference>
<dbReference type="PANTHER" id="PTHR13691">
    <property type="entry name" value="RIBOSOMAL PROTEIN L2"/>
    <property type="match status" value="1"/>
</dbReference>
<dbReference type="Pfam" id="PF00181">
    <property type="entry name" value="Ribosomal_L2"/>
    <property type="match status" value="1"/>
</dbReference>
<dbReference type="Pfam" id="PF03947">
    <property type="entry name" value="Ribosomal_L2_C"/>
    <property type="match status" value="1"/>
</dbReference>
<dbReference type="PIRSF" id="PIRSF002158">
    <property type="entry name" value="Ribosomal_L2"/>
    <property type="match status" value="1"/>
</dbReference>
<dbReference type="SMART" id="SM01383">
    <property type="entry name" value="Ribosomal_L2"/>
    <property type="match status" value="1"/>
</dbReference>
<dbReference type="SMART" id="SM01382">
    <property type="entry name" value="Ribosomal_L2_C"/>
    <property type="match status" value="1"/>
</dbReference>
<dbReference type="SUPFAM" id="SSF50249">
    <property type="entry name" value="Nucleic acid-binding proteins"/>
    <property type="match status" value="1"/>
</dbReference>
<dbReference type="SUPFAM" id="SSF50104">
    <property type="entry name" value="Translation proteins SH3-like domain"/>
    <property type="match status" value="1"/>
</dbReference>
<dbReference type="PROSITE" id="PS00467">
    <property type="entry name" value="RIBOSOMAL_L2"/>
    <property type="match status" value="1"/>
</dbReference>
<accession>A8A5C2</accession>
<proteinExistence type="inferred from homology"/>
<keyword id="KW-0007">Acetylation</keyword>
<keyword id="KW-0687">Ribonucleoprotein</keyword>
<keyword id="KW-0689">Ribosomal protein</keyword>
<keyword id="KW-0694">RNA-binding</keyword>
<keyword id="KW-0699">rRNA-binding</keyword>
<organism>
    <name type="scientific">Escherichia coli O9:H4 (strain HS)</name>
    <dbReference type="NCBI Taxonomy" id="331112"/>
    <lineage>
        <taxon>Bacteria</taxon>
        <taxon>Pseudomonadati</taxon>
        <taxon>Pseudomonadota</taxon>
        <taxon>Gammaproteobacteria</taxon>
        <taxon>Enterobacterales</taxon>
        <taxon>Enterobacteriaceae</taxon>
        <taxon>Escherichia</taxon>
    </lineage>
</organism>
<evidence type="ECO:0000255" key="1">
    <source>
        <dbReference type="HAMAP-Rule" id="MF_01320"/>
    </source>
</evidence>
<evidence type="ECO:0000256" key="2">
    <source>
        <dbReference type="SAM" id="MobiDB-lite"/>
    </source>
</evidence>
<evidence type="ECO:0000305" key="3"/>
<gene>
    <name evidence="1" type="primary">rplB</name>
    <name type="ordered locus">EcHS_A3511</name>
</gene>
<feature type="chain" id="PRO_1000067540" description="Large ribosomal subunit protein uL2">
    <location>
        <begin position="1"/>
        <end position="273"/>
    </location>
</feature>
<feature type="region of interest" description="Disordered" evidence="2">
    <location>
        <begin position="28"/>
        <end position="53"/>
    </location>
</feature>
<feature type="region of interest" description="Disordered" evidence="2">
    <location>
        <begin position="221"/>
        <end position="273"/>
    </location>
</feature>
<feature type="compositionally biased region" description="Low complexity" evidence="2">
    <location>
        <begin position="39"/>
        <end position="48"/>
    </location>
</feature>
<feature type="modified residue" description="N6-acetyllysine" evidence="1">
    <location>
        <position position="242"/>
    </location>
</feature>
<reference key="1">
    <citation type="journal article" date="2008" name="J. Bacteriol.">
        <title>The pangenome structure of Escherichia coli: comparative genomic analysis of E. coli commensal and pathogenic isolates.</title>
        <authorList>
            <person name="Rasko D.A."/>
            <person name="Rosovitz M.J."/>
            <person name="Myers G.S.A."/>
            <person name="Mongodin E.F."/>
            <person name="Fricke W.F."/>
            <person name="Gajer P."/>
            <person name="Crabtree J."/>
            <person name="Sebaihia M."/>
            <person name="Thomson N.R."/>
            <person name="Chaudhuri R."/>
            <person name="Henderson I.R."/>
            <person name="Sperandio V."/>
            <person name="Ravel J."/>
        </authorList>
    </citation>
    <scope>NUCLEOTIDE SEQUENCE [LARGE SCALE GENOMIC DNA]</scope>
    <source>
        <strain>HS</strain>
    </source>
</reference>
<protein>
    <recommendedName>
        <fullName evidence="1">Large ribosomal subunit protein uL2</fullName>
    </recommendedName>
    <alternativeName>
        <fullName evidence="3">50S ribosomal protein L2</fullName>
    </alternativeName>
</protein>